<organism>
    <name type="scientific">Acinetobacter baumannii (strain AYE)</name>
    <dbReference type="NCBI Taxonomy" id="509173"/>
    <lineage>
        <taxon>Bacteria</taxon>
        <taxon>Pseudomonadati</taxon>
        <taxon>Pseudomonadota</taxon>
        <taxon>Gammaproteobacteria</taxon>
        <taxon>Moraxellales</taxon>
        <taxon>Moraxellaceae</taxon>
        <taxon>Acinetobacter</taxon>
        <taxon>Acinetobacter calcoaceticus/baumannii complex</taxon>
    </lineage>
</organism>
<name>G6PI_ACIBY</name>
<reference key="1">
    <citation type="journal article" date="2008" name="PLoS ONE">
        <title>Comparative analysis of Acinetobacters: three genomes for three lifestyles.</title>
        <authorList>
            <person name="Vallenet D."/>
            <person name="Nordmann P."/>
            <person name="Barbe V."/>
            <person name="Poirel L."/>
            <person name="Mangenot S."/>
            <person name="Bataille E."/>
            <person name="Dossat C."/>
            <person name="Gas S."/>
            <person name="Kreimeyer A."/>
            <person name="Lenoble P."/>
            <person name="Oztas S."/>
            <person name="Poulain J."/>
            <person name="Segurens B."/>
            <person name="Robert C."/>
            <person name="Abergel C."/>
            <person name="Claverie J.-M."/>
            <person name="Raoult D."/>
            <person name="Medigue C."/>
            <person name="Weissenbach J."/>
            <person name="Cruveiller S."/>
        </authorList>
    </citation>
    <scope>NUCLEOTIDE SEQUENCE [LARGE SCALE GENOMIC DNA]</scope>
    <source>
        <strain>AYE</strain>
    </source>
</reference>
<protein>
    <recommendedName>
        <fullName evidence="1">Glucose-6-phosphate isomerase</fullName>
        <shortName evidence="1">GPI</shortName>
        <ecNumber evidence="1">5.3.1.9</ecNumber>
    </recommendedName>
    <alternativeName>
        <fullName evidence="1">Phosphoglucose isomerase</fullName>
        <shortName evidence="1">PGI</shortName>
    </alternativeName>
    <alternativeName>
        <fullName evidence="1">Phosphohexose isomerase</fullName>
        <shortName evidence="1">PHI</shortName>
    </alternativeName>
</protein>
<proteinExistence type="inferred from homology"/>
<sequence>MSKSIEQFPKDLSSPLIQLKSSVEKNSKLHIKELFALEPERFQNYSVKFDQLFFDYSKQRITKNILEQLVALANNKQLTQWINRLFSQDKINCTEQREAMHWALRLPSEYSKFPELTKQVHIQLQRMYTLVEKIHAGQYRGATGEVIQDVVNIGVGGSDLGPHMVTHALADFKVKTAKPLNVHFVSTMDGSQLSDLLHQLRPETTLFIISSKSFGTIDTLSNAQTVRQWLEKALGKHDRVVKSHFIGVSTKAEKMNEWGIAPDNQLLLWDWVGGRYSLWSCIGFPIALTIGIDGFQQLLAGAHAVDEHFQNTSFERNIPVLMALLGIWNNNFLNIQTHAVLPYDGRLKYLAAYLQQLEMESNGKSVQRDGQKVELDTCPIVWGEVGPNAQHAFYQLLHQGTQAVSCDFIAPIQRYNADHFTYVENAEALIEQHHLALSNCLAQSRLLAFGNEALDVKELEKLPIYKQYEGNQPSSTLLLDELNPYNLGMLIALYEHKVFVQSVIWNINPFDQWGVEKGKQIANQLLPILNGAQNDLSTLDASTRGLIKILLGKAE</sequence>
<evidence type="ECO:0000255" key="1">
    <source>
        <dbReference type="HAMAP-Rule" id="MF_00473"/>
    </source>
</evidence>
<comment type="function">
    <text evidence="1">Catalyzes the reversible isomerization of glucose-6-phosphate to fructose-6-phosphate.</text>
</comment>
<comment type="catalytic activity">
    <reaction evidence="1">
        <text>alpha-D-glucose 6-phosphate = beta-D-fructose 6-phosphate</text>
        <dbReference type="Rhea" id="RHEA:11816"/>
        <dbReference type="ChEBI" id="CHEBI:57634"/>
        <dbReference type="ChEBI" id="CHEBI:58225"/>
        <dbReference type="EC" id="5.3.1.9"/>
    </reaction>
</comment>
<comment type="pathway">
    <text evidence="1">Carbohydrate biosynthesis; gluconeogenesis.</text>
</comment>
<comment type="pathway">
    <text evidence="1">Carbohydrate degradation; glycolysis; D-glyceraldehyde 3-phosphate and glycerone phosphate from D-glucose: step 2/4.</text>
</comment>
<comment type="subcellular location">
    <subcellularLocation>
        <location evidence="1">Cytoplasm</location>
    </subcellularLocation>
</comment>
<comment type="similarity">
    <text evidence="1">Belongs to the GPI family.</text>
</comment>
<gene>
    <name evidence="1" type="primary">pgi</name>
    <name type="ordered locus">ABAYE3801</name>
</gene>
<dbReference type="EC" id="5.3.1.9" evidence="1"/>
<dbReference type="EMBL" id="CU459141">
    <property type="protein sequence ID" value="CAM88562.1"/>
    <property type="molecule type" value="Genomic_DNA"/>
</dbReference>
<dbReference type="RefSeq" id="WP_000045515.1">
    <property type="nucleotide sequence ID" value="NZ_JBDGFB010000006.1"/>
</dbReference>
<dbReference type="SMR" id="B0V6J2"/>
<dbReference type="EnsemblBacteria" id="CAM88562">
    <property type="protein sequence ID" value="CAM88562"/>
    <property type="gene ID" value="ABAYE3801"/>
</dbReference>
<dbReference type="KEGG" id="aby:ABAYE3801"/>
<dbReference type="HOGENOM" id="CLU_017947_3_1_6"/>
<dbReference type="UniPathway" id="UPA00109">
    <property type="reaction ID" value="UER00181"/>
</dbReference>
<dbReference type="UniPathway" id="UPA00138"/>
<dbReference type="GO" id="GO:0005829">
    <property type="term" value="C:cytosol"/>
    <property type="evidence" value="ECO:0007669"/>
    <property type="project" value="TreeGrafter"/>
</dbReference>
<dbReference type="GO" id="GO:0097367">
    <property type="term" value="F:carbohydrate derivative binding"/>
    <property type="evidence" value="ECO:0007669"/>
    <property type="project" value="InterPro"/>
</dbReference>
<dbReference type="GO" id="GO:0004347">
    <property type="term" value="F:glucose-6-phosphate isomerase activity"/>
    <property type="evidence" value="ECO:0007669"/>
    <property type="project" value="UniProtKB-UniRule"/>
</dbReference>
<dbReference type="GO" id="GO:0048029">
    <property type="term" value="F:monosaccharide binding"/>
    <property type="evidence" value="ECO:0007669"/>
    <property type="project" value="TreeGrafter"/>
</dbReference>
<dbReference type="GO" id="GO:0006094">
    <property type="term" value="P:gluconeogenesis"/>
    <property type="evidence" value="ECO:0007669"/>
    <property type="project" value="UniProtKB-UniRule"/>
</dbReference>
<dbReference type="GO" id="GO:0051156">
    <property type="term" value="P:glucose 6-phosphate metabolic process"/>
    <property type="evidence" value="ECO:0007669"/>
    <property type="project" value="TreeGrafter"/>
</dbReference>
<dbReference type="GO" id="GO:0006096">
    <property type="term" value="P:glycolytic process"/>
    <property type="evidence" value="ECO:0007669"/>
    <property type="project" value="UniProtKB-UniRule"/>
</dbReference>
<dbReference type="CDD" id="cd05015">
    <property type="entry name" value="SIS_PGI_1"/>
    <property type="match status" value="1"/>
</dbReference>
<dbReference type="CDD" id="cd05016">
    <property type="entry name" value="SIS_PGI_2"/>
    <property type="match status" value="1"/>
</dbReference>
<dbReference type="Gene3D" id="1.10.1390.10">
    <property type="match status" value="1"/>
</dbReference>
<dbReference type="Gene3D" id="3.40.50.10490">
    <property type="entry name" value="Glucose-6-phosphate isomerase like protein, domain 1"/>
    <property type="match status" value="2"/>
</dbReference>
<dbReference type="HAMAP" id="MF_00473">
    <property type="entry name" value="G6P_isomerase"/>
    <property type="match status" value="1"/>
</dbReference>
<dbReference type="InterPro" id="IPR001672">
    <property type="entry name" value="G6P_Isomerase"/>
</dbReference>
<dbReference type="InterPro" id="IPR023096">
    <property type="entry name" value="G6P_Isomerase_C"/>
</dbReference>
<dbReference type="InterPro" id="IPR018189">
    <property type="entry name" value="Phosphoglucose_isomerase_CS"/>
</dbReference>
<dbReference type="InterPro" id="IPR046348">
    <property type="entry name" value="SIS_dom_sf"/>
</dbReference>
<dbReference type="InterPro" id="IPR035476">
    <property type="entry name" value="SIS_PGI_1"/>
</dbReference>
<dbReference type="InterPro" id="IPR035482">
    <property type="entry name" value="SIS_PGI_2"/>
</dbReference>
<dbReference type="NCBIfam" id="NF001211">
    <property type="entry name" value="PRK00179.1"/>
    <property type="match status" value="1"/>
</dbReference>
<dbReference type="PANTHER" id="PTHR11469">
    <property type="entry name" value="GLUCOSE-6-PHOSPHATE ISOMERASE"/>
    <property type="match status" value="1"/>
</dbReference>
<dbReference type="PANTHER" id="PTHR11469:SF1">
    <property type="entry name" value="GLUCOSE-6-PHOSPHATE ISOMERASE"/>
    <property type="match status" value="1"/>
</dbReference>
<dbReference type="Pfam" id="PF00342">
    <property type="entry name" value="PGI"/>
    <property type="match status" value="1"/>
</dbReference>
<dbReference type="PRINTS" id="PR00662">
    <property type="entry name" value="G6PISOMERASE"/>
</dbReference>
<dbReference type="SUPFAM" id="SSF53697">
    <property type="entry name" value="SIS domain"/>
    <property type="match status" value="1"/>
</dbReference>
<dbReference type="PROSITE" id="PS00765">
    <property type="entry name" value="P_GLUCOSE_ISOMERASE_1"/>
    <property type="match status" value="1"/>
</dbReference>
<dbReference type="PROSITE" id="PS00174">
    <property type="entry name" value="P_GLUCOSE_ISOMERASE_2"/>
    <property type="match status" value="1"/>
</dbReference>
<dbReference type="PROSITE" id="PS51463">
    <property type="entry name" value="P_GLUCOSE_ISOMERASE_3"/>
    <property type="match status" value="1"/>
</dbReference>
<accession>B0V6J2</accession>
<keyword id="KW-0963">Cytoplasm</keyword>
<keyword id="KW-0312">Gluconeogenesis</keyword>
<keyword id="KW-0324">Glycolysis</keyword>
<keyword id="KW-0413">Isomerase</keyword>
<feature type="chain" id="PRO_1000125685" description="Glucose-6-phosphate isomerase">
    <location>
        <begin position="1"/>
        <end position="555"/>
    </location>
</feature>
<feature type="active site" description="Proton donor" evidence="1">
    <location>
        <position position="360"/>
    </location>
</feature>
<feature type="active site" evidence="1">
    <location>
        <position position="391"/>
    </location>
</feature>
<feature type="active site" evidence="1">
    <location>
        <position position="519"/>
    </location>
</feature>